<keyword id="KW-1015">Disulfide bond</keyword>
<keyword id="KW-0272">Extracellular matrix</keyword>
<keyword id="KW-0325">Glycoprotein</keyword>
<keyword id="KW-0373">Hyaluronic acid</keyword>
<keyword id="KW-0393">Immunoglobulin domain</keyword>
<keyword id="KW-0654">Proteoglycan</keyword>
<keyword id="KW-1185">Reference proteome</keyword>
<keyword id="KW-0677">Repeat</keyword>
<keyword id="KW-0964">Secreted</keyword>
<keyword id="KW-0732">Signal</keyword>
<organism>
    <name type="scientific">Felis catus</name>
    <name type="common">Cat</name>
    <name type="synonym">Felis silvestris catus</name>
    <dbReference type="NCBI Taxonomy" id="9685"/>
    <lineage>
        <taxon>Eukaryota</taxon>
        <taxon>Metazoa</taxon>
        <taxon>Chordata</taxon>
        <taxon>Craniata</taxon>
        <taxon>Vertebrata</taxon>
        <taxon>Euteleostomi</taxon>
        <taxon>Mammalia</taxon>
        <taxon>Eutheria</taxon>
        <taxon>Laurasiatheria</taxon>
        <taxon>Carnivora</taxon>
        <taxon>Feliformia</taxon>
        <taxon>Felidae</taxon>
        <taxon>Felinae</taxon>
        <taxon>Felis</taxon>
    </lineage>
</organism>
<dbReference type="EMBL" id="Z28367">
    <property type="protein sequence ID" value="CAA82216.1"/>
    <property type="status" value="ALT_FRAME"/>
    <property type="molecule type" value="mRNA"/>
</dbReference>
<dbReference type="PIR" id="I46268">
    <property type="entry name" value="I46268"/>
</dbReference>
<dbReference type="STRING" id="9685.ENSFCAP00000006092"/>
<dbReference type="GlyCosmos" id="P41725">
    <property type="glycosylation" value="3 sites, No reported glycans"/>
</dbReference>
<dbReference type="InParanoid" id="P41725"/>
<dbReference type="Proteomes" id="UP000011712">
    <property type="component" value="Unplaced"/>
</dbReference>
<dbReference type="GO" id="GO:0005615">
    <property type="term" value="C:extracellular space"/>
    <property type="evidence" value="ECO:0000318"/>
    <property type="project" value="GO_Central"/>
</dbReference>
<dbReference type="GO" id="GO:0072534">
    <property type="term" value="C:perineuronal net"/>
    <property type="evidence" value="ECO:0000318"/>
    <property type="project" value="GO_Central"/>
</dbReference>
<dbReference type="GO" id="GO:0045202">
    <property type="term" value="C:synapse"/>
    <property type="evidence" value="ECO:0000318"/>
    <property type="project" value="GO_Central"/>
</dbReference>
<dbReference type="GO" id="GO:0005540">
    <property type="term" value="F:hyaluronic acid binding"/>
    <property type="evidence" value="ECO:0007669"/>
    <property type="project" value="UniProtKB-KW"/>
</dbReference>
<dbReference type="GO" id="GO:0007155">
    <property type="term" value="P:cell adhesion"/>
    <property type="evidence" value="ECO:0007669"/>
    <property type="project" value="InterPro"/>
</dbReference>
<dbReference type="GO" id="GO:0007417">
    <property type="term" value="P:central nervous system development"/>
    <property type="evidence" value="ECO:0000318"/>
    <property type="project" value="GO_Central"/>
</dbReference>
<dbReference type="GO" id="GO:0001501">
    <property type="term" value="P:skeletal system development"/>
    <property type="evidence" value="ECO:0000318"/>
    <property type="project" value="GO_Central"/>
</dbReference>
<dbReference type="CDD" id="cd03517">
    <property type="entry name" value="Link_domain_CSPGs_modules_1_3"/>
    <property type="match status" value="1"/>
</dbReference>
<dbReference type="CDD" id="cd03520">
    <property type="entry name" value="Link_domain_CSPGs_modules_2_4"/>
    <property type="match status" value="1"/>
</dbReference>
<dbReference type="FunFam" id="3.10.100.10:FF:000011">
    <property type="entry name" value="Aggrecan core protein"/>
    <property type="match status" value="1"/>
</dbReference>
<dbReference type="FunFam" id="2.60.40.10:FF:000698">
    <property type="entry name" value="brevican core protein"/>
    <property type="match status" value="1"/>
</dbReference>
<dbReference type="FunFam" id="3.10.100.10:FF:000002">
    <property type="entry name" value="Hyaluronan proteoglycan link protein 1"/>
    <property type="match status" value="1"/>
</dbReference>
<dbReference type="Gene3D" id="2.60.40.10">
    <property type="entry name" value="Immunoglobulins"/>
    <property type="match status" value="1"/>
</dbReference>
<dbReference type="Gene3D" id="3.10.100.10">
    <property type="entry name" value="Mannose-Binding Protein A, subunit A"/>
    <property type="match status" value="2"/>
</dbReference>
<dbReference type="InterPro" id="IPR016186">
    <property type="entry name" value="C-type_lectin-like/link_sf"/>
</dbReference>
<dbReference type="InterPro" id="IPR016187">
    <property type="entry name" value="CTDL_fold"/>
</dbReference>
<dbReference type="InterPro" id="IPR050691">
    <property type="entry name" value="Hyaluronan_bind_Proteoglycan"/>
</dbReference>
<dbReference type="InterPro" id="IPR007110">
    <property type="entry name" value="Ig-like_dom"/>
</dbReference>
<dbReference type="InterPro" id="IPR036179">
    <property type="entry name" value="Ig-like_dom_sf"/>
</dbReference>
<dbReference type="InterPro" id="IPR013783">
    <property type="entry name" value="Ig-like_fold"/>
</dbReference>
<dbReference type="InterPro" id="IPR003006">
    <property type="entry name" value="Ig/MHC_CS"/>
</dbReference>
<dbReference type="InterPro" id="IPR003599">
    <property type="entry name" value="Ig_sub"/>
</dbReference>
<dbReference type="InterPro" id="IPR013106">
    <property type="entry name" value="Ig_V-set"/>
</dbReference>
<dbReference type="InterPro" id="IPR000538">
    <property type="entry name" value="Link_dom"/>
</dbReference>
<dbReference type="PANTHER" id="PTHR22804">
    <property type="entry name" value="AGGRECAN/VERSICAN PROTEOGLYCAN"/>
    <property type="match status" value="1"/>
</dbReference>
<dbReference type="PANTHER" id="PTHR22804:SF41">
    <property type="entry name" value="BREVICAN CORE PROTEIN"/>
    <property type="match status" value="1"/>
</dbReference>
<dbReference type="Pfam" id="PF07686">
    <property type="entry name" value="V-set"/>
    <property type="match status" value="1"/>
</dbReference>
<dbReference type="Pfam" id="PF00193">
    <property type="entry name" value="Xlink"/>
    <property type="match status" value="2"/>
</dbReference>
<dbReference type="PRINTS" id="PR01265">
    <property type="entry name" value="LINKMODULE"/>
</dbReference>
<dbReference type="SMART" id="SM00409">
    <property type="entry name" value="IG"/>
    <property type="match status" value="1"/>
</dbReference>
<dbReference type="SMART" id="SM00406">
    <property type="entry name" value="IGv"/>
    <property type="match status" value="1"/>
</dbReference>
<dbReference type="SMART" id="SM00445">
    <property type="entry name" value="LINK"/>
    <property type="match status" value="2"/>
</dbReference>
<dbReference type="SUPFAM" id="SSF56436">
    <property type="entry name" value="C-type lectin-like"/>
    <property type="match status" value="2"/>
</dbReference>
<dbReference type="SUPFAM" id="SSF48726">
    <property type="entry name" value="Immunoglobulin"/>
    <property type="match status" value="1"/>
</dbReference>
<dbReference type="PROSITE" id="PS50835">
    <property type="entry name" value="IG_LIKE"/>
    <property type="match status" value="1"/>
</dbReference>
<dbReference type="PROSITE" id="PS00290">
    <property type="entry name" value="IG_MHC"/>
    <property type="match status" value="1"/>
</dbReference>
<dbReference type="PROSITE" id="PS01241">
    <property type="entry name" value="LINK_1"/>
    <property type="match status" value="2"/>
</dbReference>
<dbReference type="PROSITE" id="PS50963">
    <property type="entry name" value="LINK_2"/>
    <property type="match status" value="2"/>
</dbReference>
<name>PGCB_FELCA</name>
<feature type="signal peptide" evidence="3">
    <location>
        <begin position="1"/>
        <end position="22"/>
    </location>
</feature>
<feature type="chain" id="PRO_0000017510" description="Brevican core protein">
    <location>
        <begin position="23"/>
        <end position="417" status="greater than"/>
    </location>
</feature>
<feature type="domain" description="Ig-like V-type">
    <location>
        <begin position="23"/>
        <end position="155"/>
    </location>
</feature>
<feature type="domain" description="Link 1" evidence="4">
    <location>
        <begin position="157"/>
        <end position="252"/>
    </location>
</feature>
<feature type="domain" description="Link 2" evidence="4">
    <location>
        <begin position="257"/>
        <end position="354"/>
    </location>
</feature>
<feature type="glycosylation site" description="N-linked (GlcNAc...) asparagine" evidence="3">
    <location>
        <position position="130"/>
    </location>
</feature>
<feature type="glycosylation site" description="N-linked (GlcNAc...) asparagine" evidence="3">
    <location>
        <position position="267"/>
    </location>
</feature>
<feature type="glycosylation site" description="N-linked (GlcNAc...) asparagine" evidence="3">
    <location>
        <position position="337"/>
    </location>
</feature>
<feature type="disulfide bond" evidence="1">
    <location>
        <begin position="57"/>
        <end position="137"/>
    </location>
</feature>
<feature type="disulfide bond" evidence="1">
    <location>
        <begin position="179"/>
        <end position="250"/>
    </location>
</feature>
<feature type="disulfide bond" evidence="1">
    <location>
        <begin position="203"/>
        <end position="224"/>
    </location>
</feature>
<feature type="disulfide bond" evidence="1">
    <location>
        <begin position="277"/>
        <end position="352"/>
    </location>
</feature>
<feature type="disulfide bond" evidence="1">
    <location>
        <begin position="301"/>
        <end position="322"/>
    </location>
</feature>
<feature type="non-terminal residue">
    <location>
        <position position="417"/>
    </location>
</feature>
<gene>
    <name type="primary">BCAN</name>
</gene>
<proteinExistence type="evidence at transcript level"/>
<protein>
    <recommendedName>
        <fullName>Brevican core protein</fullName>
    </recommendedName>
    <alternativeName>
        <fullName>Brain-enriched hyaluronan-binding protein</fullName>
        <shortName>BEHAB</shortName>
    </alternativeName>
</protein>
<comment type="function">
    <text>May play a role in the terminally differentiating and the adult nervous system during postnatal development. Could stabilize interactions between hyaluronan (HA) and brain proteoglycans.</text>
</comment>
<comment type="subcellular location">
    <subcellularLocation>
        <location evidence="1">Secreted</location>
        <location evidence="1">Extracellular space</location>
        <location evidence="1">Extracellular matrix</location>
    </subcellularLocation>
    <subcellularLocation>
        <location evidence="2">Secreted</location>
    </subcellularLocation>
</comment>
<comment type="tissue specificity">
    <text>Central nervous system.</text>
</comment>
<comment type="similarity">
    <text evidence="5">Belongs to the aggrecan/versican proteoglycan family.</text>
</comment>
<comment type="sequence caution" evidence="5">
    <conflict type="frameshift">
        <sequence resource="EMBL-CDS" id="CAA82216"/>
    </conflict>
</comment>
<evidence type="ECO:0000250" key="1"/>
<evidence type="ECO:0000250" key="2">
    <source>
        <dbReference type="UniProtKB" id="Q96GW7"/>
    </source>
</evidence>
<evidence type="ECO:0000255" key="3"/>
<evidence type="ECO:0000255" key="4">
    <source>
        <dbReference type="PROSITE-ProRule" id="PRU00323"/>
    </source>
</evidence>
<evidence type="ECO:0000305" key="5"/>
<accession>P41725</accession>
<sequence>MAPLFLPLLIALALAPGPTASADVLEGDSSEDRAFRVRISGNAPLQGVLGGALTISCHVHYLRPPPGRRAVLGSPRVKWTFLSGGREAEVLVARGLRVKVSEAYRFRVALPAYPASLTDVSLALSELRPNDSGIYRCEVQHGIDDSSDAVEVKVKGVVFLYREGSARYAFSFARAQEACARIGARIATPEQLYAAYLGGYEQCDAGWLSDQTVRYPIQTPREACYGDMDGFPGVRNYGLVDPDDLYDIYCYAEDLNGELFLGAPPDNVTLEEATAYCRERGAEIATTGQLYAAWDGGLDRCSPGWLADGSVRYPIVTPSQRCGGGLPGVKTLFLFPNQTGFPNKYSRFNVYCFRDSGQPSTTPEASXPASDGLEAIVTVTETLEELHVPREAVESESRGAIYSVPIVEDGGGARSPP</sequence>
<reference key="1">
    <citation type="journal article" date="1994" name="J. Cell Biol.">
        <title>BEHAB, a new member of the proteoglycan tandem repeat family of hyaluronan-binding proteins that is restricted to the brain.</title>
        <authorList>
            <person name="Jaworski D.M."/>
            <person name="Kelly G.M."/>
            <person name="Hockfield S."/>
        </authorList>
    </citation>
    <scope>NUCLEOTIDE SEQUENCE [MRNA]</scope>
    <source>
        <tissue>Brain</tissue>
    </source>
</reference>
<reference key="2">
    <citation type="journal article" date="1995" name="Biochem. Biophys. Res. Commun.">
        <title>cDNA cloning and the identification of an aggrecanase-like cleavage site in rat brevican.</title>
        <authorList>
            <person name="Yamada H."/>
            <person name="Watanabe K."/>
            <person name="Shimonaka M."/>
            <person name="Yamasaki M."/>
            <person name="Yamaguchi Y."/>
        </authorList>
    </citation>
    <scope>IDENTIFICATION OF PROBABLE FRAMESHIFT</scope>
</reference>